<name>MURE_HAEI8</name>
<accession>Q4QLG3</accession>
<proteinExistence type="inferred from homology"/>
<evidence type="ECO:0000255" key="1">
    <source>
        <dbReference type="HAMAP-Rule" id="MF_00208"/>
    </source>
</evidence>
<organism>
    <name type="scientific">Haemophilus influenzae (strain 86-028NP)</name>
    <dbReference type="NCBI Taxonomy" id="281310"/>
    <lineage>
        <taxon>Bacteria</taxon>
        <taxon>Pseudomonadati</taxon>
        <taxon>Pseudomonadota</taxon>
        <taxon>Gammaproteobacteria</taxon>
        <taxon>Pasteurellales</taxon>
        <taxon>Pasteurellaceae</taxon>
        <taxon>Haemophilus</taxon>
    </lineage>
</organism>
<protein>
    <recommendedName>
        <fullName evidence="1">UDP-N-acetylmuramoyl-L-alanyl-D-glutamate--2,6-diaminopimelate ligase</fullName>
        <ecNumber evidence="1">6.3.2.13</ecNumber>
    </recommendedName>
    <alternativeName>
        <fullName evidence="1">Meso-A2pm-adding enzyme</fullName>
    </alternativeName>
    <alternativeName>
        <fullName evidence="1">Meso-diaminopimelate-adding enzyme</fullName>
    </alternativeName>
    <alternativeName>
        <fullName evidence="1">UDP-MurNAc-L-Ala-D-Glu:meso-diaminopimelate ligase</fullName>
    </alternativeName>
    <alternativeName>
        <fullName evidence="1">UDP-MurNAc-tripeptide synthetase</fullName>
    </alternativeName>
    <alternativeName>
        <fullName evidence="1">UDP-N-acetylmuramyl-tripeptide synthetase</fullName>
    </alternativeName>
</protein>
<reference key="1">
    <citation type="journal article" date="2005" name="J. Bacteriol.">
        <title>Genomic sequence of an otitis media isolate of nontypeable Haemophilus influenzae: comparative study with H. influenzae serotype d, strain KW20.</title>
        <authorList>
            <person name="Harrison A."/>
            <person name="Dyer D.W."/>
            <person name="Gillaspy A."/>
            <person name="Ray W.C."/>
            <person name="Mungur R."/>
            <person name="Carson M.B."/>
            <person name="Zhong H."/>
            <person name="Gipson J."/>
            <person name="Gipson M."/>
            <person name="Johnson L.S."/>
            <person name="Lewis L."/>
            <person name="Bakaletz L.O."/>
            <person name="Munson R.S. Jr."/>
        </authorList>
    </citation>
    <scope>NUCLEOTIDE SEQUENCE [LARGE SCALE GENOMIC DNA]</scope>
    <source>
        <strain>86-028NP</strain>
    </source>
</reference>
<comment type="function">
    <text evidence="1">Catalyzes the addition of meso-diaminopimelic acid to the nucleotide precursor UDP-N-acetylmuramoyl-L-alanyl-D-glutamate (UMAG) in the biosynthesis of bacterial cell-wall peptidoglycan.</text>
</comment>
<comment type="catalytic activity">
    <reaction evidence="1">
        <text>UDP-N-acetyl-alpha-D-muramoyl-L-alanyl-D-glutamate + meso-2,6-diaminopimelate + ATP = UDP-N-acetyl-alpha-D-muramoyl-L-alanyl-gamma-D-glutamyl-meso-2,6-diaminopimelate + ADP + phosphate + H(+)</text>
        <dbReference type="Rhea" id="RHEA:23676"/>
        <dbReference type="ChEBI" id="CHEBI:15378"/>
        <dbReference type="ChEBI" id="CHEBI:30616"/>
        <dbReference type="ChEBI" id="CHEBI:43474"/>
        <dbReference type="ChEBI" id="CHEBI:57791"/>
        <dbReference type="ChEBI" id="CHEBI:83900"/>
        <dbReference type="ChEBI" id="CHEBI:83905"/>
        <dbReference type="ChEBI" id="CHEBI:456216"/>
        <dbReference type="EC" id="6.3.2.13"/>
    </reaction>
</comment>
<comment type="cofactor">
    <cofactor evidence="1">
        <name>Mg(2+)</name>
        <dbReference type="ChEBI" id="CHEBI:18420"/>
    </cofactor>
</comment>
<comment type="pathway">
    <text evidence="1">Cell wall biogenesis; peptidoglycan biosynthesis.</text>
</comment>
<comment type="subcellular location">
    <subcellularLocation>
        <location evidence="1">Cytoplasm</location>
    </subcellularLocation>
</comment>
<comment type="PTM">
    <text evidence="1">Carboxylation is probably crucial for Mg(2+) binding and, consequently, for the gamma-phosphate positioning of ATP.</text>
</comment>
<comment type="similarity">
    <text evidence="1">Belongs to the MurCDEF family. MurE subfamily.</text>
</comment>
<keyword id="KW-0067">ATP-binding</keyword>
<keyword id="KW-0131">Cell cycle</keyword>
<keyword id="KW-0132">Cell division</keyword>
<keyword id="KW-0133">Cell shape</keyword>
<keyword id="KW-0961">Cell wall biogenesis/degradation</keyword>
<keyword id="KW-0963">Cytoplasm</keyword>
<keyword id="KW-0436">Ligase</keyword>
<keyword id="KW-0460">Magnesium</keyword>
<keyword id="KW-0547">Nucleotide-binding</keyword>
<keyword id="KW-0573">Peptidoglycan synthesis</keyword>
<sequence>MKKLTALFNLPELKNDIELHNMVLDSRKVKAGDLFVAIKGHQVDGNQFIDSALHSGASAVVSETELSSEHLTVAFIRNVPVVKYYQLARHLSSLADVFYDSPSKNLTLVGVTGTNGKTTISQLLAQWAELLGHRAAVMGTIGNGLLGQIVEAKNTTGSAVEIQSSLSTFKHAGADFTSIEVSSHGLAQHRVEALHFKAAIFTNLTRDHLDYHQSMENYAAAKKRLFTELDTQIKVINADDEIGYQWLTELPDAIAVSMNADFKVGSHQWMKAINIHYHFKGADITFESSWGNGVLHSPLIGAFNVSNLLLVMTTLLSFGYPLENLLATAKSLKGVCGRMEMIQYPNKPIVIVDYAHTPDALEKALIAAREHCQGELWCIFGCGGDRDRGKRPLMAQVAEQFAEKIIVTKDNPRTEPQSQIEADIVAGFKNMEKVGIIPDRAQAIQFAIESAVENDVILIAGKGHEHYQIIGSEVVHFSDQEIALDFLK</sequence>
<feature type="chain" id="PRO_1000012356" description="UDP-N-acetylmuramoyl-L-alanyl-D-glutamate--2,6-diaminopimelate ligase">
    <location>
        <begin position="1"/>
        <end position="488"/>
    </location>
</feature>
<feature type="short sequence motif" description="Meso-diaminopimelate recognition motif">
    <location>
        <begin position="410"/>
        <end position="413"/>
    </location>
</feature>
<feature type="binding site" evidence="1">
    <location>
        <position position="24"/>
    </location>
    <ligand>
        <name>UDP-N-acetyl-alpha-D-muramoyl-L-alanyl-D-glutamate</name>
        <dbReference type="ChEBI" id="CHEBI:83900"/>
    </ligand>
</feature>
<feature type="binding site" evidence="1">
    <location>
        <position position="26"/>
    </location>
    <ligand>
        <name>UDP-N-acetyl-alpha-D-muramoyl-L-alanyl-D-glutamate</name>
        <dbReference type="ChEBI" id="CHEBI:83900"/>
    </ligand>
</feature>
<feature type="binding site" evidence="1">
    <location>
        <begin position="41"/>
        <end position="43"/>
    </location>
    <ligand>
        <name>UDP-N-acetyl-alpha-D-muramoyl-L-alanyl-D-glutamate</name>
        <dbReference type="ChEBI" id="CHEBI:83900"/>
    </ligand>
</feature>
<feature type="binding site" evidence="1">
    <location>
        <begin position="113"/>
        <end position="119"/>
    </location>
    <ligand>
        <name>ATP</name>
        <dbReference type="ChEBI" id="CHEBI:30616"/>
    </ligand>
</feature>
<feature type="binding site" evidence="1">
    <location>
        <position position="154"/>
    </location>
    <ligand>
        <name>UDP-N-acetyl-alpha-D-muramoyl-L-alanyl-D-glutamate</name>
        <dbReference type="ChEBI" id="CHEBI:83900"/>
    </ligand>
</feature>
<feature type="binding site" evidence="1">
    <location>
        <begin position="155"/>
        <end position="156"/>
    </location>
    <ligand>
        <name>UDP-N-acetyl-alpha-D-muramoyl-L-alanyl-D-glutamate</name>
        <dbReference type="ChEBI" id="CHEBI:83900"/>
    </ligand>
</feature>
<feature type="binding site" evidence="1">
    <location>
        <position position="182"/>
    </location>
    <ligand>
        <name>UDP-N-acetyl-alpha-D-muramoyl-L-alanyl-D-glutamate</name>
        <dbReference type="ChEBI" id="CHEBI:83900"/>
    </ligand>
</feature>
<feature type="binding site" evidence="1">
    <location>
        <position position="188"/>
    </location>
    <ligand>
        <name>UDP-N-acetyl-alpha-D-muramoyl-L-alanyl-D-glutamate</name>
        <dbReference type="ChEBI" id="CHEBI:83900"/>
    </ligand>
</feature>
<feature type="binding site" evidence="1">
    <location>
        <position position="190"/>
    </location>
    <ligand>
        <name>UDP-N-acetyl-alpha-D-muramoyl-L-alanyl-D-glutamate</name>
        <dbReference type="ChEBI" id="CHEBI:83900"/>
    </ligand>
</feature>
<feature type="binding site" evidence="1">
    <location>
        <position position="386"/>
    </location>
    <ligand>
        <name>meso-2,6-diaminopimelate</name>
        <dbReference type="ChEBI" id="CHEBI:57791"/>
    </ligand>
</feature>
<feature type="binding site" evidence="1">
    <location>
        <begin position="410"/>
        <end position="413"/>
    </location>
    <ligand>
        <name>meso-2,6-diaminopimelate</name>
        <dbReference type="ChEBI" id="CHEBI:57791"/>
    </ligand>
</feature>
<feature type="binding site" evidence="1">
    <location>
        <position position="461"/>
    </location>
    <ligand>
        <name>meso-2,6-diaminopimelate</name>
        <dbReference type="ChEBI" id="CHEBI:57791"/>
    </ligand>
</feature>
<feature type="binding site" evidence="1">
    <location>
        <position position="465"/>
    </location>
    <ligand>
        <name>meso-2,6-diaminopimelate</name>
        <dbReference type="ChEBI" id="CHEBI:57791"/>
    </ligand>
</feature>
<feature type="modified residue" description="N6-carboxylysine" evidence="1">
    <location>
        <position position="222"/>
    </location>
</feature>
<dbReference type="EC" id="6.3.2.13" evidence="1"/>
<dbReference type="EMBL" id="CP000057">
    <property type="protein sequence ID" value="AAX88134.1"/>
    <property type="molecule type" value="Genomic_DNA"/>
</dbReference>
<dbReference type="RefSeq" id="WP_011272398.1">
    <property type="nucleotide sequence ID" value="NC_007146.2"/>
</dbReference>
<dbReference type="SMR" id="Q4QLG3"/>
<dbReference type="GeneID" id="93220139"/>
<dbReference type="KEGG" id="hit:NTHI1300"/>
<dbReference type="HOGENOM" id="CLU_022291_3_2_6"/>
<dbReference type="UniPathway" id="UPA00219"/>
<dbReference type="Proteomes" id="UP000002525">
    <property type="component" value="Chromosome"/>
</dbReference>
<dbReference type="GO" id="GO:0005737">
    <property type="term" value="C:cytoplasm"/>
    <property type="evidence" value="ECO:0007669"/>
    <property type="project" value="UniProtKB-SubCell"/>
</dbReference>
<dbReference type="GO" id="GO:0005524">
    <property type="term" value="F:ATP binding"/>
    <property type="evidence" value="ECO:0007669"/>
    <property type="project" value="UniProtKB-UniRule"/>
</dbReference>
<dbReference type="GO" id="GO:0000287">
    <property type="term" value="F:magnesium ion binding"/>
    <property type="evidence" value="ECO:0007669"/>
    <property type="project" value="UniProtKB-UniRule"/>
</dbReference>
<dbReference type="GO" id="GO:0008765">
    <property type="term" value="F:UDP-N-acetylmuramoylalanyl-D-glutamate-2,6-diaminopimelate ligase activity"/>
    <property type="evidence" value="ECO:0007669"/>
    <property type="project" value="UniProtKB-UniRule"/>
</dbReference>
<dbReference type="GO" id="GO:0051301">
    <property type="term" value="P:cell division"/>
    <property type="evidence" value="ECO:0007669"/>
    <property type="project" value="UniProtKB-KW"/>
</dbReference>
<dbReference type="GO" id="GO:0071555">
    <property type="term" value="P:cell wall organization"/>
    <property type="evidence" value="ECO:0007669"/>
    <property type="project" value="UniProtKB-KW"/>
</dbReference>
<dbReference type="GO" id="GO:0009252">
    <property type="term" value="P:peptidoglycan biosynthetic process"/>
    <property type="evidence" value="ECO:0007669"/>
    <property type="project" value="UniProtKB-UniRule"/>
</dbReference>
<dbReference type="GO" id="GO:0008360">
    <property type="term" value="P:regulation of cell shape"/>
    <property type="evidence" value="ECO:0007669"/>
    <property type="project" value="UniProtKB-KW"/>
</dbReference>
<dbReference type="FunFam" id="3.90.190.20:FF:000006">
    <property type="entry name" value="UDP-N-acetylmuramoyl-L-alanyl-D-glutamate--2,6-diaminopimelate ligase"/>
    <property type="match status" value="1"/>
</dbReference>
<dbReference type="Gene3D" id="3.90.190.20">
    <property type="entry name" value="Mur ligase, C-terminal domain"/>
    <property type="match status" value="1"/>
</dbReference>
<dbReference type="Gene3D" id="3.40.1190.10">
    <property type="entry name" value="Mur-like, catalytic domain"/>
    <property type="match status" value="1"/>
</dbReference>
<dbReference type="Gene3D" id="3.40.1390.10">
    <property type="entry name" value="MurE/MurF, N-terminal domain"/>
    <property type="match status" value="1"/>
</dbReference>
<dbReference type="HAMAP" id="MF_00208">
    <property type="entry name" value="MurE"/>
    <property type="match status" value="1"/>
</dbReference>
<dbReference type="InterPro" id="IPR036565">
    <property type="entry name" value="Mur-like_cat_sf"/>
</dbReference>
<dbReference type="InterPro" id="IPR004101">
    <property type="entry name" value="Mur_ligase_C"/>
</dbReference>
<dbReference type="InterPro" id="IPR036615">
    <property type="entry name" value="Mur_ligase_C_dom_sf"/>
</dbReference>
<dbReference type="InterPro" id="IPR013221">
    <property type="entry name" value="Mur_ligase_cen"/>
</dbReference>
<dbReference type="InterPro" id="IPR000713">
    <property type="entry name" value="Mur_ligase_N"/>
</dbReference>
<dbReference type="InterPro" id="IPR035911">
    <property type="entry name" value="MurE/MurF_N"/>
</dbReference>
<dbReference type="InterPro" id="IPR005761">
    <property type="entry name" value="UDP-N-AcMur-Glu-dNH2Pim_ligase"/>
</dbReference>
<dbReference type="NCBIfam" id="TIGR01085">
    <property type="entry name" value="murE"/>
    <property type="match status" value="1"/>
</dbReference>
<dbReference type="NCBIfam" id="NF001123">
    <property type="entry name" value="PRK00139.1-1"/>
    <property type="match status" value="1"/>
</dbReference>
<dbReference type="NCBIfam" id="NF001124">
    <property type="entry name" value="PRK00139.1-2"/>
    <property type="match status" value="1"/>
</dbReference>
<dbReference type="NCBIfam" id="NF001126">
    <property type="entry name" value="PRK00139.1-4"/>
    <property type="match status" value="1"/>
</dbReference>
<dbReference type="PANTHER" id="PTHR23135">
    <property type="entry name" value="MUR LIGASE FAMILY MEMBER"/>
    <property type="match status" value="1"/>
</dbReference>
<dbReference type="PANTHER" id="PTHR23135:SF4">
    <property type="entry name" value="UDP-N-ACETYLMURAMOYL-L-ALANYL-D-GLUTAMATE--2,6-DIAMINOPIMELATE LIGASE MURE HOMOLOG, CHLOROPLASTIC"/>
    <property type="match status" value="1"/>
</dbReference>
<dbReference type="Pfam" id="PF01225">
    <property type="entry name" value="Mur_ligase"/>
    <property type="match status" value="1"/>
</dbReference>
<dbReference type="Pfam" id="PF02875">
    <property type="entry name" value="Mur_ligase_C"/>
    <property type="match status" value="1"/>
</dbReference>
<dbReference type="Pfam" id="PF08245">
    <property type="entry name" value="Mur_ligase_M"/>
    <property type="match status" value="1"/>
</dbReference>
<dbReference type="SUPFAM" id="SSF53623">
    <property type="entry name" value="MurD-like peptide ligases, catalytic domain"/>
    <property type="match status" value="1"/>
</dbReference>
<dbReference type="SUPFAM" id="SSF53244">
    <property type="entry name" value="MurD-like peptide ligases, peptide-binding domain"/>
    <property type="match status" value="1"/>
</dbReference>
<dbReference type="SUPFAM" id="SSF63418">
    <property type="entry name" value="MurE/MurF N-terminal domain"/>
    <property type="match status" value="1"/>
</dbReference>
<gene>
    <name evidence="1" type="primary">murE</name>
    <name type="ordered locus">NTHI1300</name>
</gene>